<evidence type="ECO:0000250" key="1">
    <source>
        <dbReference type="UniProtKB" id="P0A9J6"/>
    </source>
</evidence>
<evidence type="ECO:0000255" key="2">
    <source>
        <dbReference type="HAMAP-Rule" id="MF_03215"/>
    </source>
</evidence>
<evidence type="ECO:0000269" key="3">
    <source>
    </source>
</evidence>
<evidence type="ECO:0000269" key="4">
    <source>
    </source>
</evidence>
<evidence type="ECO:0000303" key="5">
    <source>
    </source>
</evidence>
<evidence type="ECO:0000305" key="6"/>
<evidence type="ECO:0000312" key="7">
    <source>
        <dbReference type="SGD" id="S000000632"/>
    </source>
</evidence>
<name>RBSK_YEAST</name>
<dbReference type="EC" id="2.7.1.15" evidence="1 2"/>
<dbReference type="EMBL" id="X56909">
    <property type="protein sequence ID" value="CAA40228.1"/>
    <property type="molecule type" value="Genomic_DNA"/>
</dbReference>
<dbReference type="EMBL" id="X59720">
    <property type="protein sequence ID" value="CAA42303.2"/>
    <property type="molecule type" value="Genomic_DNA"/>
</dbReference>
<dbReference type="EMBL" id="BK006937">
    <property type="protein sequence ID" value="DAA07515.1"/>
    <property type="molecule type" value="Genomic_DNA"/>
</dbReference>
<dbReference type="PIR" id="S12918">
    <property type="entry name" value="KIBYRB"/>
</dbReference>
<dbReference type="RefSeq" id="NP_009965.2">
    <property type="nucleotide sequence ID" value="NM_001178750.1"/>
</dbReference>
<dbReference type="SMR" id="P25332"/>
<dbReference type="BioGRID" id="31019">
    <property type="interactions" value="146"/>
</dbReference>
<dbReference type="DIP" id="DIP-4990N"/>
<dbReference type="FunCoup" id="P25332">
    <property type="interactions" value="1337"/>
</dbReference>
<dbReference type="IntAct" id="P25332">
    <property type="interactions" value="24"/>
</dbReference>
<dbReference type="STRING" id="4932.YCR036W"/>
<dbReference type="GlyGen" id="P25332">
    <property type="glycosylation" value="1 site, 1 O-linked glycan (1 site)"/>
</dbReference>
<dbReference type="PaxDb" id="4932-YCR036W"/>
<dbReference type="PeptideAtlas" id="P25332"/>
<dbReference type="EnsemblFungi" id="YCR036W_mRNA">
    <property type="protein sequence ID" value="YCR036W"/>
    <property type="gene ID" value="YCR036W"/>
</dbReference>
<dbReference type="GeneID" id="850402"/>
<dbReference type="KEGG" id="sce:YCR036W"/>
<dbReference type="AGR" id="SGD:S000000632"/>
<dbReference type="SGD" id="S000000632">
    <property type="gene designation" value="RBK1"/>
</dbReference>
<dbReference type="VEuPathDB" id="FungiDB:YCR036W"/>
<dbReference type="eggNOG" id="KOG2855">
    <property type="taxonomic scope" value="Eukaryota"/>
</dbReference>
<dbReference type="GeneTree" id="ENSGT00390000005743"/>
<dbReference type="HOGENOM" id="CLU_027634_2_0_1"/>
<dbReference type="InParanoid" id="P25332"/>
<dbReference type="OMA" id="DIVLIQQ"/>
<dbReference type="OrthoDB" id="415590at2759"/>
<dbReference type="BioCyc" id="YEAST:YCR036W-MONOMER"/>
<dbReference type="Reactome" id="R-SCE-71336">
    <property type="pathway name" value="Pentose phosphate pathway"/>
</dbReference>
<dbReference type="UniPathway" id="UPA00916">
    <property type="reaction ID" value="UER00889"/>
</dbReference>
<dbReference type="BioGRID-ORCS" id="850402">
    <property type="hits" value="0 hits in 10 CRISPR screens"/>
</dbReference>
<dbReference type="PRO" id="PR:P25332"/>
<dbReference type="Proteomes" id="UP000002311">
    <property type="component" value="Chromosome III"/>
</dbReference>
<dbReference type="RNAct" id="P25332">
    <property type="molecule type" value="protein"/>
</dbReference>
<dbReference type="GO" id="GO:0005737">
    <property type="term" value="C:cytoplasm"/>
    <property type="evidence" value="ECO:0007005"/>
    <property type="project" value="SGD"/>
</dbReference>
<dbReference type="GO" id="GO:0005634">
    <property type="term" value="C:nucleus"/>
    <property type="evidence" value="ECO:0007005"/>
    <property type="project" value="SGD"/>
</dbReference>
<dbReference type="GO" id="GO:0005524">
    <property type="term" value="F:ATP binding"/>
    <property type="evidence" value="ECO:0007669"/>
    <property type="project" value="UniProtKB-UniRule"/>
</dbReference>
<dbReference type="GO" id="GO:0046872">
    <property type="term" value="F:metal ion binding"/>
    <property type="evidence" value="ECO:0007669"/>
    <property type="project" value="UniProtKB-KW"/>
</dbReference>
<dbReference type="GO" id="GO:0004747">
    <property type="term" value="F:ribokinase activity"/>
    <property type="evidence" value="ECO:0000250"/>
    <property type="project" value="SGD"/>
</dbReference>
<dbReference type="GO" id="GO:0019303">
    <property type="term" value="P:D-ribose catabolic process"/>
    <property type="evidence" value="ECO:0000250"/>
    <property type="project" value="SGD"/>
</dbReference>
<dbReference type="CDD" id="cd01174">
    <property type="entry name" value="ribokinase"/>
    <property type="match status" value="1"/>
</dbReference>
<dbReference type="FunFam" id="3.40.1190.20:FF:000071">
    <property type="entry name" value="Ribokinase"/>
    <property type="match status" value="1"/>
</dbReference>
<dbReference type="Gene3D" id="3.40.1190.20">
    <property type="match status" value="1"/>
</dbReference>
<dbReference type="HAMAP" id="MF_01987">
    <property type="entry name" value="Ribokinase"/>
    <property type="match status" value="1"/>
</dbReference>
<dbReference type="InterPro" id="IPR002173">
    <property type="entry name" value="Carboh/pur_kinase_PfkB_CS"/>
</dbReference>
<dbReference type="InterPro" id="IPR011611">
    <property type="entry name" value="PfkB_dom"/>
</dbReference>
<dbReference type="InterPro" id="IPR002139">
    <property type="entry name" value="Ribo/fructo_kinase"/>
</dbReference>
<dbReference type="InterPro" id="IPR011877">
    <property type="entry name" value="Ribokinase"/>
</dbReference>
<dbReference type="InterPro" id="IPR029056">
    <property type="entry name" value="Ribokinase-like"/>
</dbReference>
<dbReference type="PANTHER" id="PTHR10584:SF166">
    <property type="entry name" value="RIBOKINASE"/>
    <property type="match status" value="1"/>
</dbReference>
<dbReference type="PANTHER" id="PTHR10584">
    <property type="entry name" value="SUGAR KINASE"/>
    <property type="match status" value="1"/>
</dbReference>
<dbReference type="Pfam" id="PF00294">
    <property type="entry name" value="PfkB"/>
    <property type="match status" value="1"/>
</dbReference>
<dbReference type="PRINTS" id="PR00990">
    <property type="entry name" value="RIBOKINASE"/>
</dbReference>
<dbReference type="SUPFAM" id="SSF53613">
    <property type="entry name" value="Ribokinase-like"/>
    <property type="match status" value="1"/>
</dbReference>
<dbReference type="PROSITE" id="PS00584">
    <property type="entry name" value="PFKB_KINASES_2"/>
    <property type="match status" value="1"/>
</dbReference>
<reference key="1">
    <citation type="journal article" date="1990" name="Yeast">
        <title>The complete sequence of the 8.2 kb segment left of MAT on chromosome III reveals five ORFs, including a gene for a yeast ribokinase.</title>
        <authorList>
            <person name="Thierry A."/>
            <person name="Fairhead C."/>
            <person name="Dujon B."/>
        </authorList>
    </citation>
    <scope>NUCLEOTIDE SEQUENCE [GENOMIC DNA]</scope>
    <source>
        <strain>ATCC 96604 / S288c / FY1679</strain>
    </source>
</reference>
<reference key="2">
    <citation type="journal article" date="1992" name="Nature">
        <title>The complete DNA sequence of yeast chromosome III.</title>
        <authorList>
            <person name="Oliver S.G."/>
            <person name="van der Aart Q.J.M."/>
            <person name="Agostoni-Carbone M.L."/>
            <person name="Aigle M."/>
            <person name="Alberghina L."/>
            <person name="Alexandraki D."/>
            <person name="Antoine G."/>
            <person name="Anwar R."/>
            <person name="Ballesta J.P.G."/>
            <person name="Benit P."/>
            <person name="Berben G."/>
            <person name="Bergantino E."/>
            <person name="Biteau N."/>
            <person name="Bolle P.-A."/>
            <person name="Bolotin-Fukuhara M."/>
            <person name="Brown A."/>
            <person name="Brown A.J.P."/>
            <person name="Buhler J.-M."/>
            <person name="Carcano C."/>
            <person name="Carignani G."/>
            <person name="Cederberg H."/>
            <person name="Chanet R."/>
            <person name="Contreras R."/>
            <person name="Crouzet M."/>
            <person name="Daignan-Fornier B."/>
            <person name="Defoor E."/>
            <person name="Delgado M.D."/>
            <person name="Demolder J."/>
            <person name="Doira C."/>
            <person name="Dubois E."/>
            <person name="Dujon B."/>
            <person name="Duesterhoeft A."/>
            <person name="Erdmann D."/>
            <person name="Esteban M."/>
            <person name="Fabre F."/>
            <person name="Fairhead C."/>
            <person name="Faye G."/>
            <person name="Feldmann H."/>
            <person name="Fiers W."/>
            <person name="Francingues-Gaillard M.-C."/>
            <person name="Franco L."/>
            <person name="Frontali L."/>
            <person name="Fukuhara H."/>
            <person name="Fuller L.J."/>
            <person name="Galland P."/>
            <person name="Gent M.E."/>
            <person name="Gigot D."/>
            <person name="Gilliquet V."/>
            <person name="Glansdorff N."/>
            <person name="Goffeau A."/>
            <person name="Grenson M."/>
            <person name="Grisanti P."/>
            <person name="Grivell L.A."/>
            <person name="de Haan M."/>
            <person name="Haasemann M."/>
            <person name="Hatat D."/>
            <person name="Hoenicka J."/>
            <person name="Hegemann J.H."/>
            <person name="Herbert C.J."/>
            <person name="Hilger F."/>
            <person name="Hohmann S."/>
            <person name="Hollenberg C.P."/>
            <person name="Huse K."/>
            <person name="Iborra F."/>
            <person name="Indge K.J."/>
            <person name="Isono K."/>
            <person name="Jacq C."/>
            <person name="Jacquet M."/>
            <person name="James C.M."/>
            <person name="Jauniaux J.-C."/>
            <person name="Jia Y."/>
            <person name="Jimenez A."/>
            <person name="Kelly A."/>
            <person name="Kleinhans U."/>
            <person name="Kreisl P."/>
            <person name="Lanfranchi G."/>
            <person name="Lewis C."/>
            <person name="van der Linden C.G."/>
            <person name="Lucchini G."/>
            <person name="Lutzenkirchen K."/>
            <person name="Maat M.J."/>
            <person name="Mallet L."/>
            <person name="Mannhaupt G."/>
            <person name="Martegani E."/>
            <person name="Mathieu A."/>
            <person name="Maurer C.T.C."/>
            <person name="McConnell D."/>
            <person name="McKee R.A."/>
            <person name="Messenguy F."/>
            <person name="Mewes H.-W."/>
            <person name="Molemans F."/>
            <person name="Montague M.A."/>
            <person name="Muzi Falconi M."/>
            <person name="Navas L."/>
            <person name="Newlon C.S."/>
            <person name="Noone D."/>
            <person name="Pallier C."/>
            <person name="Panzeri L."/>
            <person name="Pearson B.M."/>
            <person name="Perea J."/>
            <person name="Philippsen P."/>
            <person name="Pierard A."/>
            <person name="Planta R.J."/>
            <person name="Plevani P."/>
            <person name="Poetsch B."/>
            <person name="Pohl F.M."/>
            <person name="Purnelle B."/>
            <person name="Ramezani Rad M."/>
            <person name="Rasmussen S.W."/>
            <person name="Raynal A."/>
            <person name="Remacha M.A."/>
            <person name="Richterich P."/>
            <person name="Roberts A.B."/>
            <person name="Rodriguez F."/>
            <person name="Sanz E."/>
            <person name="Schaaff-Gerstenschlaeger I."/>
            <person name="Scherens B."/>
            <person name="Schweitzer B."/>
            <person name="Shu Y."/>
            <person name="Skala J."/>
            <person name="Slonimski P.P."/>
            <person name="Sor F."/>
            <person name="Soustelle C."/>
            <person name="Spiegelberg R."/>
            <person name="Stateva L.I."/>
            <person name="Steensma H.Y."/>
            <person name="Steiner S."/>
            <person name="Thierry A."/>
            <person name="Thireos G."/>
            <person name="Tzermia M."/>
            <person name="Urrestarazu L.A."/>
            <person name="Valle G."/>
            <person name="Vetter I."/>
            <person name="van Vliet-Reedijk J.C."/>
            <person name="Voet M."/>
            <person name="Volckaert G."/>
            <person name="Vreken P."/>
            <person name="Wang H."/>
            <person name="Warmington J.R."/>
            <person name="von Wettstein D."/>
            <person name="Wicksteed B.L."/>
            <person name="Wilson C."/>
            <person name="Wurst H."/>
            <person name="Xu G."/>
            <person name="Yoshikawa A."/>
            <person name="Zimmermann F.K."/>
            <person name="Sgouros J.G."/>
        </authorList>
    </citation>
    <scope>NUCLEOTIDE SEQUENCE [LARGE SCALE GENOMIC DNA]</scope>
    <source>
        <strain>ATCC 204508 / S288c</strain>
    </source>
</reference>
<reference key="3">
    <citation type="submission" date="2001-06" db="EMBL/GenBank/DDBJ databases">
        <authorList>
            <person name="Valles G."/>
            <person name="Volckaerts G."/>
        </authorList>
    </citation>
    <scope>SEQUENCE REVISION TO 178 AND 301</scope>
</reference>
<reference key="4">
    <citation type="journal article" date="2014" name="G3 (Bethesda)">
        <title>The reference genome sequence of Saccharomyces cerevisiae: Then and now.</title>
        <authorList>
            <person name="Engel S.R."/>
            <person name="Dietrich F.S."/>
            <person name="Fisk D.G."/>
            <person name="Binkley G."/>
            <person name="Balakrishnan R."/>
            <person name="Costanzo M.C."/>
            <person name="Dwight S.S."/>
            <person name="Hitz B.C."/>
            <person name="Karra K."/>
            <person name="Nash R.S."/>
            <person name="Weng S."/>
            <person name="Wong E.D."/>
            <person name="Lloyd P."/>
            <person name="Skrzypek M.S."/>
            <person name="Miyasato S.R."/>
            <person name="Simison M."/>
            <person name="Cherry J.M."/>
        </authorList>
    </citation>
    <scope>GENOME REANNOTATION</scope>
    <source>
        <strain>ATCC 204508 / S288c</strain>
    </source>
</reference>
<reference key="5">
    <citation type="journal article" date="2003" name="Nature">
        <title>Global analysis of protein localization in budding yeast.</title>
        <authorList>
            <person name="Huh W.-K."/>
            <person name="Falvo J.V."/>
            <person name="Gerke L.C."/>
            <person name="Carroll A.S."/>
            <person name="Howson R.W."/>
            <person name="Weissman J.S."/>
            <person name="O'Shea E.K."/>
        </authorList>
    </citation>
    <scope>SUBCELLULAR LOCATION [LARGE SCALE ANALYSIS]</scope>
</reference>
<reference key="6">
    <citation type="journal article" date="2003" name="Nature">
        <title>Global analysis of protein expression in yeast.</title>
        <authorList>
            <person name="Ghaemmaghami S."/>
            <person name="Huh W.-K."/>
            <person name="Bower K."/>
            <person name="Howson R.W."/>
            <person name="Belle A."/>
            <person name="Dephoure N."/>
            <person name="O'Shea E.K."/>
            <person name="Weissman J.S."/>
        </authorList>
    </citation>
    <scope>LEVEL OF PROTEIN EXPRESSION [LARGE SCALE ANALYSIS]</scope>
</reference>
<accession>P25332</accession>
<accession>D6VR46</accession>
<proteinExistence type="evidence at protein level"/>
<organism>
    <name type="scientific">Saccharomyces cerevisiae (strain ATCC 204508 / S288c)</name>
    <name type="common">Baker's yeast</name>
    <dbReference type="NCBI Taxonomy" id="559292"/>
    <lineage>
        <taxon>Eukaryota</taxon>
        <taxon>Fungi</taxon>
        <taxon>Dikarya</taxon>
        <taxon>Ascomycota</taxon>
        <taxon>Saccharomycotina</taxon>
        <taxon>Saccharomycetes</taxon>
        <taxon>Saccharomycetales</taxon>
        <taxon>Saccharomycetaceae</taxon>
        <taxon>Saccharomyces</taxon>
    </lineage>
</organism>
<comment type="function">
    <text evidence="2">Catalyzes the phosphorylation of ribose at O-5 in a reaction requiring ATP and magnesium. The resulting D-ribose-5-phosphate can then be used either for sythesis of nucleotides, histidine, and tryptophan, or as a component of the pentose phosphate pathway.</text>
</comment>
<comment type="catalytic activity">
    <reaction evidence="2">
        <text>D-ribose + ATP = D-ribose 5-phosphate + ADP + H(+)</text>
        <dbReference type="Rhea" id="RHEA:13697"/>
        <dbReference type="ChEBI" id="CHEBI:15378"/>
        <dbReference type="ChEBI" id="CHEBI:30616"/>
        <dbReference type="ChEBI" id="CHEBI:47013"/>
        <dbReference type="ChEBI" id="CHEBI:78346"/>
        <dbReference type="ChEBI" id="CHEBI:456216"/>
        <dbReference type="EC" id="2.7.1.15"/>
    </reaction>
</comment>
<comment type="cofactor">
    <cofactor evidence="2">
        <name>Mg(2+)</name>
        <dbReference type="ChEBI" id="CHEBI:18420"/>
    </cofactor>
    <text evidence="2">Requires a divalent cation, most likely magnesium in vivo, as an electrophilic catalyst to aid phosphoryl group transfer. It is the chelate of the metal and the nucleotide that is the actual substrate.</text>
</comment>
<comment type="activity regulation">
    <text evidence="2">Activated by a monovalent cation that binds near, but not in, the active site. The most likely occupant of the site in vivo is potassium. Ion binding induces a conformational change that may alter substrate affinity.</text>
</comment>
<comment type="pathway">
    <text evidence="2">Carbohydrate metabolism; D-ribose degradation; D-ribose 5-phosphate from beta-D-ribopyranose: step 2/2.</text>
</comment>
<comment type="subunit">
    <text evidence="2">Homodimer.</text>
</comment>
<comment type="subcellular location">
    <subcellularLocation>
        <location evidence="2 3">Cytoplasm</location>
    </subcellularLocation>
    <subcellularLocation>
        <location evidence="2 3">Nucleus</location>
    </subcellularLocation>
</comment>
<comment type="miscellaneous">
    <text evidence="4">Present with 1780 molecules/cell in log phase SD medium.</text>
</comment>
<comment type="similarity">
    <text evidence="2">Belongs to the carbohydrate kinase PfkB family. Ribokinase subfamily.</text>
</comment>
<keyword id="KW-0067">ATP-binding</keyword>
<keyword id="KW-0119">Carbohydrate metabolism</keyword>
<keyword id="KW-0963">Cytoplasm</keyword>
<keyword id="KW-0418">Kinase</keyword>
<keyword id="KW-0460">Magnesium</keyword>
<keyword id="KW-0479">Metal-binding</keyword>
<keyword id="KW-0547">Nucleotide-binding</keyword>
<keyword id="KW-0539">Nucleus</keyword>
<keyword id="KW-0630">Potassium</keyword>
<keyword id="KW-1185">Reference proteome</keyword>
<keyword id="KW-0808">Transferase</keyword>
<feature type="chain" id="PRO_0000080094" description="Ribokinase">
    <location>
        <begin position="1"/>
        <end position="333"/>
    </location>
</feature>
<feature type="active site" description="Proton acceptor" evidence="2">
    <location>
        <position position="283"/>
    </location>
</feature>
<feature type="binding site" evidence="2">
    <location>
        <begin position="10"/>
        <end position="12"/>
    </location>
    <ligand>
        <name>substrate</name>
    </ligand>
</feature>
<feature type="binding site" evidence="2">
    <location>
        <begin position="38"/>
        <end position="42"/>
    </location>
    <ligand>
        <name>substrate</name>
    </ligand>
</feature>
<feature type="binding site" evidence="2">
    <location>
        <position position="149"/>
    </location>
    <ligand>
        <name>substrate</name>
    </ligand>
</feature>
<feature type="binding site" evidence="2">
    <location>
        <position position="193"/>
    </location>
    <ligand>
        <name>ATP</name>
        <dbReference type="ChEBI" id="CHEBI:30616"/>
    </ligand>
</feature>
<feature type="binding site" evidence="2">
    <location>
        <begin position="248"/>
        <end position="253"/>
    </location>
    <ligand>
        <name>ATP</name>
        <dbReference type="ChEBI" id="CHEBI:30616"/>
    </ligand>
</feature>
<feature type="binding site" evidence="2">
    <location>
        <position position="277"/>
    </location>
    <ligand>
        <name>K(+)</name>
        <dbReference type="ChEBI" id="CHEBI:29103"/>
    </ligand>
</feature>
<feature type="binding site" evidence="2">
    <location>
        <position position="279"/>
    </location>
    <ligand>
        <name>K(+)</name>
        <dbReference type="ChEBI" id="CHEBI:29103"/>
    </ligand>
</feature>
<feature type="binding site" evidence="2">
    <location>
        <begin position="282"/>
        <end position="283"/>
    </location>
    <ligand>
        <name>ATP</name>
        <dbReference type="ChEBI" id="CHEBI:30616"/>
    </ligand>
</feature>
<feature type="binding site" evidence="2">
    <location>
        <position position="283"/>
    </location>
    <ligand>
        <name>substrate</name>
    </ligand>
</feature>
<feature type="binding site" evidence="2">
    <location>
        <position position="313"/>
    </location>
    <ligand>
        <name>K(+)</name>
        <dbReference type="ChEBI" id="CHEBI:29103"/>
    </ligand>
</feature>
<feature type="binding site" evidence="2">
    <location>
        <position position="316"/>
    </location>
    <ligand>
        <name>K(+)</name>
        <dbReference type="ChEBI" id="CHEBI:29103"/>
    </ligand>
</feature>
<feature type="binding site" evidence="2">
    <location>
        <position position="318"/>
    </location>
    <ligand>
        <name>K(+)</name>
        <dbReference type="ChEBI" id="CHEBI:29103"/>
    </ligand>
</feature>
<feature type="binding site" evidence="2">
    <location>
        <position position="322"/>
    </location>
    <ligand>
        <name>K(+)</name>
        <dbReference type="ChEBI" id="CHEBI:29103"/>
    </ligand>
</feature>
<feature type="sequence conflict" description="In Ref. 1; CAA40228." evidence="6" ref="1">
    <original>A</original>
    <variation>T</variation>
    <location>
        <position position="178"/>
    </location>
</feature>
<feature type="sequence conflict" description="In Ref. 1; CAA40228." evidence="6" ref="1">
    <original>T</original>
    <variation>M</variation>
    <location>
        <position position="301"/>
    </location>
</feature>
<gene>
    <name evidence="2 5" type="primary">RBK1</name>
    <name evidence="7" type="ordered locus">YCR036W</name>
    <name type="ORF">YCR36W</name>
    <name type="ORF">YCR523</name>
</gene>
<sequence length="333" mass="36924">MGITVIGSLNYDLDTFTDRLPNAGETFRANHFETHAGGKGLNQAAAIGKLKNPSSRYSVRMIGNVGNDTFGKQLKDTLSDCGVDITHVGTYEGINTGTATILIEEKAGGQNRILIVEGANSKTIYDPKQLCEIFPEGKEEEEYVVFQHEIPDPLSIIKWIHANRPNFQIVYNPSPFKAMPKKDWELVDLLVVNEIEGLQIVESVFDNELVEEIREKIKDDFLGEYRKICELLYEKLMNRKKRGIVVMTLGSRGVLFCSHESPEVQFLPAIQNVSVVDTTGAGDTFLGGLVTQLYQGETLSTAIKFSTLASSLTIQRKGAAESMPLYKDVQKDA</sequence>
<protein>
    <recommendedName>
        <fullName evidence="2 5">Ribokinase</fullName>
        <shortName evidence="2">RK</shortName>
        <ecNumber evidence="1 2">2.7.1.15</ecNumber>
    </recommendedName>
</protein>